<reference key="1">
    <citation type="journal article" date="2008" name="Genome Res.">
        <title>The genome of Pelotomaculum thermopropionicum reveals niche-associated evolution in anaerobic microbiota.</title>
        <authorList>
            <person name="Kosaka T."/>
            <person name="Kato S."/>
            <person name="Shimoyama T."/>
            <person name="Ishii S."/>
            <person name="Abe T."/>
            <person name="Watanabe K."/>
        </authorList>
    </citation>
    <scope>NUCLEOTIDE SEQUENCE [LARGE SCALE GENOMIC DNA]</scope>
    <source>
        <strain>DSM 13744 / JCM 10971 / SI</strain>
    </source>
</reference>
<sequence>MPKHGKKLTEALKQVDRSVLYDPAEAFELLKKVAPAKFDETVEVAVRLGVDPRHADQQVRGAVVLPHGTGKTRTVLVFAKGDKAREAEEAGADFVGAEDMVARIQQEGWLGFDVAIATPDMMGMVGKLGRILGPRGLMPNPKTGTVTFDIARAVKEVKAGKIEYRVDKAGIIHAPIGKVSFSTEKLVENLRTLIEALIRAKPAAAKGQYLKGISVSSTMGPGIKVNTQKVTA</sequence>
<feature type="chain" id="PRO_1000086295" description="Large ribosomal subunit protein uL1">
    <location>
        <begin position="1"/>
        <end position="232"/>
    </location>
</feature>
<comment type="function">
    <text evidence="1">Binds directly to 23S rRNA. The L1 stalk is quite mobile in the ribosome, and is involved in E site tRNA release.</text>
</comment>
<comment type="function">
    <text evidence="1">Protein L1 is also a translational repressor protein, it controls the translation of the L11 operon by binding to its mRNA.</text>
</comment>
<comment type="subunit">
    <text evidence="1">Part of the 50S ribosomal subunit.</text>
</comment>
<comment type="similarity">
    <text evidence="1">Belongs to the universal ribosomal protein uL1 family.</text>
</comment>
<gene>
    <name evidence="1" type="primary">rplA</name>
    <name type="ordered locus">PTH_0307</name>
</gene>
<protein>
    <recommendedName>
        <fullName evidence="1">Large ribosomal subunit protein uL1</fullName>
    </recommendedName>
    <alternativeName>
        <fullName evidence="2">50S ribosomal protein L1</fullName>
    </alternativeName>
</protein>
<organism>
    <name type="scientific">Pelotomaculum thermopropionicum (strain DSM 13744 / JCM 10971 / SI)</name>
    <dbReference type="NCBI Taxonomy" id="370438"/>
    <lineage>
        <taxon>Bacteria</taxon>
        <taxon>Bacillati</taxon>
        <taxon>Bacillota</taxon>
        <taxon>Clostridia</taxon>
        <taxon>Eubacteriales</taxon>
        <taxon>Desulfotomaculaceae</taxon>
        <taxon>Pelotomaculum</taxon>
    </lineage>
</organism>
<accession>A5D5H7</accession>
<evidence type="ECO:0000255" key="1">
    <source>
        <dbReference type="HAMAP-Rule" id="MF_01318"/>
    </source>
</evidence>
<evidence type="ECO:0000305" key="2"/>
<proteinExistence type="inferred from homology"/>
<name>RL1_PELTS</name>
<dbReference type="EMBL" id="AP009389">
    <property type="protein sequence ID" value="BAF58488.1"/>
    <property type="molecule type" value="Genomic_DNA"/>
</dbReference>
<dbReference type="SMR" id="A5D5H7"/>
<dbReference type="STRING" id="370438.PTH_0307"/>
<dbReference type="KEGG" id="pth:PTH_0307"/>
<dbReference type="eggNOG" id="COG0081">
    <property type="taxonomic scope" value="Bacteria"/>
</dbReference>
<dbReference type="HOGENOM" id="CLU_062853_0_0_9"/>
<dbReference type="Proteomes" id="UP000006556">
    <property type="component" value="Chromosome"/>
</dbReference>
<dbReference type="GO" id="GO:0015934">
    <property type="term" value="C:large ribosomal subunit"/>
    <property type="evidence" value="ECO:0007669"/>
    <property type="project" value="InterPro"/>
</dbReference>
<dbReference type="GO" id="GO:0019843">
    <property type="term" value="F:rRNA binding"/>
    <property type="evidence" value="ECO:0007669"/>
    <property type="project" value="UniProtKB-UniRule"/>
</dbReference>
<dbReference type="GO" id="GO:0003735">
    <property type="term" value="F:structural constituent of ribosome"/>
    <property type="evidence" value="ECO:0007669"/>
    <property type="project" value="InterPro"/>
</dbReference>
<dbReference type="GO" id="GO:0000049">
    <property type="term" value="F:tRNA binding"/>
    <property type="evidence" value="ECO:0007669"/>
    <property type="project" value="UniProtKB-KW"/>
</dbReference>
<dbReference type="GO" id="GO:0006417">
    <property type="term" value="P:regulation of translation"/>
    <property type="evidence" value="ECO:0007669"/>
    <property type="project" value="UniProtKB-KW"/>
</dbReference>
<dbReference type="GO" id="GO:0006412">
    <property type="term" value="P:translation"/>
    <property type="evidence" value="ECO:0007669"/>
    <property type="project" value="UniProtKB-UniRule"/>
</dbReference>
<dbReference type="CDD" id="cd00403">
    <property type="entry name" value="Ribosomal_L1"/>
    <property type="match status" value="1"/>
</dbReference>
<dbReference type="FunFam" id="3.40.50.790:FF:000001">
    <property type="entry name" value="50S ribosomal protein L1"/>
    <property type="match status" value="1"/>
</dbReference>
<dbReference type="Gene3D" id="3.30.190.20">
    <property type="match status" value="1"/>
</dbReference>
<dbReference type="Gene3D" id="3.40.50.790">
    <property type="match status" value="1"/>
</dbReference>
<dbReference type="HAMAP" id="MF_01318_B">
    <property type="entry name" value="Ribosomal_uL1_B"/>
    <property type="match status" value="1"/>
</dbReference>
<dbReference type="InterPro" id="IPR005878">
    <property type="entry name" value="Ribosom_uL1_bac-type"/>
</dbReference>
<dbReference type="InterPro" id="IPR002143">
    <property type="entry name" value="Ribosomal_uL1"/>
</dbReference>
<dbReference type="InterPro" id="IPR023674">
    <property type="entry name" value="Ribosomal_uL1-like"/>
</dbReference>
<dbReference type="InterPro" id="IPR028364">
    <property type="entry name" value="Ribosomal_uL1/biogenesis"/>
</dbReference>
<dbReference type="InterPro" id="IPR016095">
    <property type="entry name" value="Ribosomal_uL1_3-a/b-sand"/>
</dbReference>
<dbReference type="InterPro" id="IPR023673">
    <property type="entry name" value="Ribosomal_uL1_CS"/>
</dbReference>
<dbReference type="NCBIfam" id="TIGR01169">
    <property type="entry name" value="rplA_bact"/>
    <property type="match status" value="1"/>
</dbReference>
<dbReference type="PANTHER" id="PTHR36427">
    <property type="entry name" value="54S RIBOSOMAL PROTEIN L1, MITOCHONDRIAL"/>
    <property type="match status" value="1"/>
</dbReference>
<dbReference type="PANTHER" id="PTHR36427:SF3">
    <property type="entry name" value="LARGE RIBOSOMAL SUBUNIT PROTEIN UL1M"/>
    <property type="match status" value="1"/>
</dbReference>
<dbReference type="Pfam" id="PF00687">
    <property type="entry name" value="Ribosomal_L1"/>
    <property type="match status" value="1"/>
</dbReference>
<dbReference type="PIRSF" id="PIRSF002155">
    <property type="entry name" value="Ribosomal_L1"/>
    <property type="match status" value="1"/>
</dbReference>
<dbReference type="SUPFAM" id="SSF56808">
    <property type="entry name" value="Ribosomal protein L1"/>
    <property type="match status" value="1"/>
</dbReference>
<dbReference type="PROSITE" id="PS01199">
    <property type="entry name" value="RIBOSOMAL_L1"/>
    <property type="match status" value="1"/>
</dbReference>
<keyword id="KW-1185">Reference proteome</keyword>
<keyword id="KW-0678">Repressor</keyword>
<keyword id="KW-0687">Ribonucleoprotein</keyword>
<keyword id="KW-0689">Ribosomal protein</keyword>
<keyword id="KW-0694">RNA-binding</keyword>
<keyword id="KW-0699">rRNA-binding</keyword>
<keyword id="KW-0810">Translation regulation</keyword>
<keyword id="KW-0820">tRNA-binding</keyword>